<proteinExistence type="inferred from homology"/>
<gene>
    <name evidence="1" type="primary">DRE2</name>
    <name type="ORF">BDBG_09482</name>
</gene>
<dbReference type="EMBL" id="GG657496">
    <property type="protein sequence ID" value="OAT14462.1"/>
    <property type="molecule type" value="Genomic_DNA"/>
</dbReference>
<dbReference type="RefSeq" id="XP_002620143.1">
    <property type="nucleotide sequence ID" value="XM_002620097.1"/>
</dbReference>
<dbReference type="STRING" id="559298.C5K3T8"/>
<dbReference type="GeneID" id="8500874"/>
<dbReference type="KEGG" id="bgh:BDBG_09482"/>
<dbReference type="VEuPathDB" id="FungiDB:BDBG_09482"/>
<dbReference type="HOGENOM" id="CLU_067152_1_0_1"/>
<dbReference type="OrthoDB" id="311633at2759"/>
<dbReference type="Proteomes" id="UP000002038">
    <property type="component" value="Unassembled WGS sequence"/>
</dbReference>
<dbReference type="GO" id="GO:0005758">
    <property type="term" value="C:mitochondrial intermembrane space"/>
    <property type="evidence" value="ECO:0007669"/>
    <property type="project" value="UniProtKB-SubCell"/>
</dbReference>
<dbReference type="GO" id="GO:0051537">
    <property type="term" value="F:2 iron, 2 sulfur cluster binding"/>
    <property type="evidence" value="ECO:0007669"/>
    <property type="project" value="UniProtKB-UniRule"/>
</dbReference>
<dbReference type="GO" id="GO:0051539">
    <property type="term" value="F:4 iron, 4 sulfur cluster binding"/>
    <property type="evidence" value="ECO:0007669"/>
    <property type="project" value="UniProtKB-KW"/>
</dbReference>
<dbReference type="GO" id="GO:0009055">
    <property type="term" value="F:electron transfer activity"/>
    <property type="evidence" value="ECO:0007669"/>
    <property type="project" value="UniProtKB-UniRule"/>
</dbReference>
<dbReference type="GO" id="GO:0046872">
    <property type="term" value="F:metal ion binding"/>
    <property type="evidence" value="ECO:0007669"/>
    <property type="project" value="UniProtKB-KW"/>
</dbReference>
<dbReference type="GO" id="GO:0016226">
    <property type="term" value="P:iron-sulfur cluster assembly"/>
    <property type="evidence" value="ECO:0007669"/>
    <property type="project" value="UniProtKB-UniRule"/>
</dbReference>
<dbReference type="Gene3D" id="3.40.50.11000">
    <property type="entry name" value="Fe-S cluster assembly protein Dre2, N-terminal domain"/>
    <property type="match status" value="1"/>
</dbReference>
<dbReference type="HAMAP" id="MF_03115">
    <property type="entry name" value="Anamorsin"/>
    <property type="match status" value="1"/>
</dbReference>
<dbReference type="InterPro" id="IPR007785">
    <property type="entry name" value="Anamorsin"/>
</dbReference>
<dbReference type="InterPro" id="IPR046408">
    <property type="entry name" value="CIAPIN1"/>
</dbReference>
<dbReference type="InterPro" id="IPR031838">
    <property type="entry name" value="Dre2_N"/>
</dbReference>
<dbReference type="PANTHER" id="PTHR13273">
    <property type="entry name" value="ANAMORSIN"/>
    <property type="match status" value="1"/>
</dbReference>
<dbReference type="PANTHER" id="PTHR13273:SF14">
    <property type="entry name" value="ANAMORSIN"/>
    <property type="match status" value="1"/>
</dbReference>
<dbReference type="Pfam" id="PF05093">
    <property type="entry name" value="CIAPIN1"/>
    <property type="match status" value="1"/>
</dbReference>
<dbReference type="Pfam" id="PF16803">
    <property type="entry name" value="DRE2_N"/>
    <property type="match status" value="1"/>
</dbReference>
<feature type="chain" id="PRO_0000392376" description="Fe-S cluster assembly protein DRE2">
    <location>
        <begin position="1"/>
        <end position="359"/>
    </location>
</feature>
<feature type="region of interest" description="N-terminal SAM-like domain" evidence="1">
    <location>
        <begin position="1"/>
        <end position="148"/>
    </location>
</feature>
<feature type="region of interest" description="Disordered" evidence="2">
    <location>
        <begin position="97"/>
        <end position="116"/>
    </location>
</feature>
<feature type="region of interest" description="Linker" evidence="1">
    <location>
        <begin position="149"/>
        <end position="246"/>
    </location>
</feature>
<feature type="region of interest" description="Disordered" evidence="2">
    <location>
        <begin position="149"/>
        <end position="210"/>
    </location>
</feature>
<feature type="region of interest" description="Fe-S binding site A" evidence="1">
    <location>
        <begin position="256"/>
        <end position="272"/>
    </location>
</feature>
<feature type="region of interest" description="Fe-S binding site B" evidence="1">
    <location>
        <begin position="322"/>
        <end position="336"/>
    </location>
</feature>
<feature type="short sequence motif" description="Cx2C motif 1" evidence="1">
    <location>
        <begin position="322"/>
        <end position="325"/>
    </location>
</feature>
<feature type="short sequence motif" description="Cx2C motif 2" evidence="1">
    <location>
        <begin position="333"/>
        <end position="336"/>
    </location>
</feature>
<feature type="compositionally biased region" description="Basic residues" evidence="2">
    <location>
        <begin position="152"/>
        <end position="164"/>
    </location>
</feature>
<feature type="compositionally biased region" description="Polar residues" evidence="2">
    <location>
        <begin position="167"/>
        <end position="183"/>
    </location>
</feature>
<feature type="compositionally biased region" description="Low complexity" evidence="2">
    <location>
        <begin position="184"/>
        <end position="200"/>
    </location>
</feature>
<feature type="binding site" evidence="1">
    <location>
        <position position="256"/>
    </location>
    <ligand>
        <name>[2Fe-2S] cluster</name>
        <dbReference type="ChEBI" id="CHEBI:190135"/>
    </ligand>
</feature>
<feature type="binding site" evidence="1">
    <location>
        <position position="267"/>
    </location>
    <ligand>
        <name>[2Fe-2S] cluster</name>
        <dbReference type="ChEBI" id="CHEBI:190135"/>
    </ligand>
</feature>
<feature type="binding site" evidence="1">
    <location>
        <position position="270"/>
    </location>
    <ligand>
        <name>[2Fe-2S] cluster</name>
        <dbReference type="ChEBI" id="CHEBI:190135"/>
    </ligand>
</feature>
<feature type="binding site" evidence="1">
    <location>
        <position position="272"/>
    </location>
    <ligand>
        <name>[2Fe-2S] cluster</name>
        <dbReference type="ChEBI" id="CHEBI:190135"/>
    </ligand>
</feature>
<feature type="binding site" evidence="1">
    <location>
        <position position="322"/>
    </location>
    <ligand>
        <name>[4Fe-4S] cluster</name>
        <dbReference type="ChEBI" id="CHEBI:49883"/>
    </ligand>
</feature>
<feature type="binding site" evidence="1">
    <location>
        <position position="325"/>
    </location>
    <ligand>
        <name>[4Fe-4S] cluster</name>
        <dbReference type="ChEBI" id="CHEBI:49883"/>
    </ligand>
</feature>
<feature type="binding site" evidence="1">
    <location>
        <position position="333"/>
    </location>
    <ligand>
        <name>[4Fe-4S] cluster</name>
        <dbReference type="ChEBI" id="CHEBI:49883"/>
    </ligand>
</feature>
<feature type="binding site" evidence="1">
    <location>
        <position position="336"/>
    </location>
    <ligand>
        <name>[4Fe-4S] cluster</name>
        <dbReference type="ChEBI" id="CHEBI:49883"/>
    </ligand>
</feature>
<name>DRE2_BLAGS</name>
<protein>
    <recommendedName>
        <fullName evidence="1">Fe-S cluster assembly protein DRE2</fullName>
    </recommendedName>
    <alternativeName>
        <fullName evidence="1">Anamorsin homolog</fullName>
    </alternativeName>
</protein>
<reference key="1">
    <citation type="journal article" date="2015" name="PLoS Genet.">
        <title>The dynamic genome and transcriptome of the human fungal pathogen Blastomyces and close relative Emmonsia.</title>
        <authorList>
            <person name="Munoz J.F."/>
            <person name="Gauthier G.M."/>
            <person name="Desjardins C.A."/>
            <person name="Gallo J.E."/>
            <person name="Holder J."/>
            <person name="Sullivan T.D."/>
            <person name="Marty A.J."/>
            <person name="Carmen J.C."/>
            <person name="Chen Z."/>
            <person name="Ding L."/>
            <person name="Gujja S."/>
            <person name="Magrini V."/>
            <person name="Misas E."/>
            <person name="Mitreva M."/>
            <person name="Priest M."/>
            <person name="Saif S."/>
            <person name="Whiston E.A."/>
            <person name="Young S."/>
            <person name="Zeng Q."/>
            <person name="Goldman W.E."/>
            <person name="Mardis E.R."/>
            <person name="Taylor J.W."/>
            <person name="McEwen J.G."/>
            <person name="Clay O.K."/>
            <person name="Klein B.S."/>
            <person name="Cuomo C.A."/>
        </authorList>
    </citation>
    <scope>NUCLEOTIDE SEQUENCE [LARGE SCALE GENOMIC DNA]</scope>
    <source>
        <strain>SLH14081</strain>
    </source>
</reference>
<organism>
    <name type="scientific">Blastomyces gilchristii (strain SLH14081)</name>
    <name type="common">Blastomyces dermatitidis</name>
    <dbReference type="NCBI Taxonomy" id="559298"/>
    <lineage>
        <taxon>Eukaryota</taxon>
        <taxon>Fungi</taxon>
        <taxon>Dikarya</taxon>
        <taxon>Ascomycota</taxon>
        <taxon>Pezizomycotina</taxon>
        <taxon>Eurotiomycetes</taxon>
        <taxon>Eurotiomycetidae</taxon>
        <taxon>Onygenales</taxon>
        <taxon>Ajellomycetaceae</taxon>
        <taxon>Blastomyces</taxon>
    </lineage>
</organism>
<evidence type="ECO:0000255" key="1">
    <source>
        <dbReference type="HAMAP-Rule" id="MF_03115"/>
    </source>
</evidence>
<evidence type="ECO:0000256" key="2">
    <source>
        <dbReference type="SAM" id="MobiDB-lite"/>
    </source>
</evidence>
<comment type="function">
    <text evidence="1">Component of the cytosolic iron-sulfur (Fe-S) protein assembly (CIA) machinery required for the maturation of extramitochondrial Fe-S proteins. Part of an electron transfer chain functioning in an early step of cytosolic Fe-S biogenesis, facilitating the de novo assembly of a [4Fe-4S] cluster on the scaffold complex CFD1-NBP35. Electrons are transferred to DRE2 from NADPH via the FAD- and FMN-containing protein TAH18. TAH18-DRE2 are also required for the assembly of the diferric tyrosyl radical cofactor of ribonucleotide reductase (RNR), probably by providing electrons for reduction during radical cofactor maturation in the catalytic small subunit RNR2.</text>
</comment>
<comment type="cofactor">
    <cofactor evidence="1">
        <name>[2Fe-2S] cluster</name>
        <dbReference type="ChEBI" id="CHEBI:190135"/>
    </cofactor>
</comment>
<comment type="cofactor">
    <cofactor evidence="1">
        <name>[4Fe-4S] cluster</name>
        <dbReference type="ChEBI" id="CHEBI:49883"/>
    </cofactor>
</comment>
<comment type="subunit">
    <text evidence="1">Monomer. Interacts with TAH18. Interacts with MIA40.</text>
</comment>
<comment type="subcellular location">
    <subcellularLocation>
        <location evidence="1">Cytoplasm</location>
    </subcellularLocation>
    <subcellularLocation>
        <location evidence="1">Mitochondrion intermembrane space</location>
    </subcellularLocation>
</comment>
<comment type="domain">
    <text evidence="1">The C-terminal domain binds 2 Fe-S clusters but is otherwise mostly in an intrinsically disordered conformation.</text>
</comment>
<comment type="domain">
    <text evidence="1">The N-terminal domain has structural similarity with S-adenosyl-L-methionine-dependent methyltransferases, but does not bind S-adenosyl-L-methionine. It is required for correct assembly of the 2 Fe-S clusters.</text>
</comment>
<comment type="domain">
    <text evidence="1">The twin Cx2C motifs are involved in the recognition by the mitochondrial MIA40-ERV1 disulfide relay system. The formation of 2 disulfide bonds in the Cx2C motifs through dithiol/disulfide exchange reactions effectively traps the protein in the mitochondrial intermembrane space.</text>
</comment>
<comment type="similarity">
    <text evidence="1">Belongs to the anamorsin family.</text>
</comment>
<accession>C5K3T8</accession>
<accession>A0A179V722</accession>
<sequence>MASTGRVLLLSPPSLSSHPEKLNAILGSHTRDRTDLQMLDRLVHGLVSLPASTYDIVLLLTGADNTLAEPYSLVTRDIIQQVVHSLKPAGKLRSQDNKAWGLRSSGNNSDDDNDNDELTFRNEAILAGLVFDDNGELLKPDVAAQQAVPLKLGRRKKEKERRHPSGNDVTNGKVNAPSSNGVNASTSTATATATTTTTTTPKTNPAPSGVGFIDFSDDYGVPMEEDPQGSDDELIDEDELLGEDDMGRPIVQPPECRPKPGKRRRACKDCSCGLSQKLEAEDKAKRATADKALETIMAPTMKLGSSELAEVDFTVQGKVGSCGNCSLGDAFRCDGCPYIGLPAFKPGEEVRLLNNDVQL</sequence>
<keyword id="KW-0001">2Fe-2S</keyword>
<keyword id="KW-0004">4Fe-4S</keyword>
<keyword id="KW-0963">Cytoplasm</keyword>
<keyword id="KW-0408">Iron</keyword>
<keyword id="KW-0411">Iron-sulfur</keyword>
<keyword id="KW-0479">Metal-binding</keyword>
<keyword id="KW-0496">Mitochondrion</keyword>
<keyword id="KW-1185">Reference proteome</keyword>